<evidence type="ECO:0000255" key="1">
    <source>
        <dbReference type="HAMAP-Rule" id="MF_01445"/>
    </source>
</evidence>
<comment type="function">
    <text evidence="1">Required for the formation of a threonylcarbamoyl group on adenosine at position 37 (t(6)A37) in tRNAs that read codons beginning with adenine. Is involved in the transfer of the threonylcarbamoyl moiety of threonylcarbamoyl-AMP (TC-AMP) to the N6 group of A37, together with TsaE and TsaB. TsaD likely plays a direct catalytic role in this reaction.</text>
</comment>
<comment type="catalytic activity">
    <reaction evidence="1">
        <text>L-threonylcarbamoyladenylate + adenosine(37) in tRNA = N(6)-L-threonylcarbamoyladenosine(37) in tRNA + AMP + H(+)</text>
        <dbReference type="Rhea" id="RHEA:37059"/>
        <dbReference type="Rhea" id="RHEA-COMP:10162"/>
        <dbReference type="Rhea" id="RHEA-COMP:10163"/>
        <dbReference type="ChEBI" id="CHEBI:15378"/>
        <dbReference type="ChEBI" id="CHEBI:73682"/>
        <dbReference type="ChEBI" id="CHEBI:74411"/>
        <dbReference type="ChEBI" id="CHEBI:74418"/>
        <dbReference type="ChEBI" id="CHEBI:456215"/>
        <dbReference type="EC" id="2.3.1.234"/>
    </reaction>
</comment>
<comment type="cofactor">
    <cofactor evidence="1">
        <name>Fe(2+)</name>
        <dbReference type="ChEBI" id="CHEBI:29033"/>
    </cofactor>
    <text evidence="1">Binds 1 Fe(2+) ion per subunit.</text>
</comment>
<comment type="subcellular location">
    <subcellularLocation>
        <location evidence="1">Cytoplasm</location>
    </subcellularLocation>
</comment>
<comment type="similarity">
    <text evidence="1">Belongs to the KAE1 / TsaD family.</text>
</comment>
<proteinExistence type="inferred from homology"/>
<keyword id="KW-0012">Acyltransferase</keyword>
<keyword id="KW-0963">Cytoplasm</keyword>
<keyword id="KW-0408">Iron</keyword>
<keyword id="KW-0479">Metal-binding</keyword>
<keyword id="KW-1185">Reference proteome</keyword>
<keyword id="KW-0808">Transferase</keyword>
<keyword id="KW-0819">tRNA processing</keyword>
<organism>
    <name type="scientific">Haemophilus ducreyi (strain 35000HP / ATCC 700724)</name>
    <dbReference type="NCBI Taxonomy" id="233412"/>
    <lineage>
        <taxon>Bacteria</taxon>
        <taxon>Pseudomonadati</taxon>
        <taxon>Pseudomonadota</taxon>
        <taxon>Gammaproteobacteria</taxon>
        <taxon>Pasteurellales</taxon>
        <taxon>Pasteurellaceae</taxon>
        <taxon>Haemophilus</taxon>
    </lineage>
</organism>
<feature type="chain" id="PRO_0000303380" description="tRNA N6-adenosine threonylcarbamoyltransferase">
    <location>
        <begin position="1"/>
        <end position="348"/>
    </location>
</feature>
<feature type="binding site" evidence="1">
    <location>
        <position position="111"/>
    </location>
    <ligand>
        <name>Fe cation</name>
        <dbReference type="ChEBI" id="CHEBI:24875"/>
    </ligand>
</feature>
<feature type="binding site" evidence="1">
    <location>
        <position position="115"/>
    </location>
    <ligand>
        <name>Fe cation</name>
        <dbReference type="ChEBI" id="CHEBI:24875"/>
    </ligand>
</feature>
<feature type="binding site" evidence="1">
    <location>
        <begin position="134"/>
        <end position="138"/>
    </location>
    <ligand>
        <name>substrate</name>
    </ligand>
</feature>
<feature type="binding site" evidence="1">
    <location>
        <position position="167"/>
    </location>
    <ligand>
        <name>substrate</name>
    </ligand>
</feature>
<feature type="binding site" evidence="1">
    <location>
        <position position="180"/>
    </location>
    <ligand>
        <name>substrate</name>
    </ligand>
</feature>
<feature type="binding site" evidence="1">
    <location>
        <position position="277"/>
    </location>
    <ligand>
        <name>substrate</name>
    </ligand>
</feature>
<feature type="binding site" evidence="1">
    <location>
        <position position="305"/>
    </location>
    <ligand>
        <name>Fe cation</name>
        <dbReference type="ChEBI" id="CHEBI:24875"/>
    </ligand>
</feature>
<reference key="1">
    <citation type="journal article" date="2000" name="J. Bacteriol.">
        <title>Cloning and characterization of the lipooligosaccharide galactosyltransferase II gene of Haemophilus ducreyi.</title>
        <authorList>
            <person name="Sun S."/>
            <person name="Schilling B."/>
            <person name="Tarantino L."/>
            <person name="Tullius M.V."/>
            <person name="Gibson B.W."/>
            <person name="Munson R.S. Jr."/>
        </authorList>
    </citation>
    <scope>NUCLEOTIDE SEQUENCE [GENOMIC DNA]</scope>
    <source>
        <strain>35000HP / ATCC 700724</strain>
    </source>
</reference>
<reference key="2">
    <citation type="submission" date="2003-06" db="EMBL/GenBank/DDBJ databases">
        <title>The complete genome sequence of Haemophilus ducreyi.</title>
        <authorList>
            <person name="Munson R.S. Jr."/>
            <person name="Ray W.C."/>
            <person name="Mahairas G."/>
            <person name="Sabo P."/>
            <person name="Mungur R."/>
            <person name="Johnson L."/>
            <person name="Nguyen D."/>
            <person name="Wang J."/>
            <person name="Forst C."/>
            <person name="Hood L."/>
        </authorList>
    </citation>
    <scope>NUCLEOTIDE SEQUENCE [LARGE SCALE GENOMIC DNA]</scope>
    <source>
        <strain>35000HP / ATCC 700724</strain>
    </source>
</reference>
<protein>
    <recommendedName>
        <fullName evidence="1">tRNA N6-adenosine threonylcarbamoyltransferase</fullName>
        <ecNumber evidence="1">2.3.1.234</ecNumber>
    </recommendedName>
    <alternativeName>
        <fullName evidence="1">N6-L-threonylcarbamoyladenine synthase</fullName>
        <shortName evidence="1">t(6)A synthase</shortName>
    </alternativeName>
    <alternativeName>
        <fullName evidence="1">t(6)A37 threonylcarbamoyladenosine biosynthesis protein TsaD</fullName>
    </alternativeName>
    <alternativeName>
        <fullName evidence="1">tRNA threonylcarbamoyladenosine biosynthesis protein TsaD</fullName>
    </alternativeName>
</protein>
<gene>
    <name evidence="1" type="primary">tsaD</name>
    <name type="synonym">gcp</name>
    <name type="ordered locus">HD_0471</name>
</gene>
<dbReference type="EC" id="2.3.1.234" evidence="1"/>
<dbReference type="EMBL" id="AF224466">
    <property type="protein sequence ID" value="AAF32396.1"/>
    <property type="molecule type" value="Genomic_DNA"/>
</dbReference>
<dbReference type="EMBL" id="AE017143">
    <property type="protein sequence ID" value="AAP95430.1"/>
    <property type="molecule type" value="Genomic_DNA"/>
</dbReference>
<dbReference type="RefSeq" id="WP_010944483.1">
    <property type="nucleotide sequence ID" value="NC_002940.2"/>
</dbReference>
<dbReference type="SMR" id="Q9L7A5"/>
<dbReference type="STRING" id="233412.HD_0471"/>
<dbReference type="DNASU" id="1490463"/>
<dbReference type="KEGG" id="hdu:HD_0471"/>
<dbReference type="eggNOG" id="COG0533">
    <property type="taxonomic scope" value="Bacteria"/>
</dbReference>
<dbReference type="HOGENOM" id="CLU_023208_0_0_6"/>
<dbReference type="OrthoDB" id="9806197at2"/>
<dbReference type="Proteomes" id="UP000001022">
    <property type="component" value="Chromosome"/>
</dbReference>
<dbReference type="GO" id="GO:0005737">
    <property type="term" value="C:cytoplasm"/>
    <property type="evidence" value="ECO:0007669"/>
    <property type="project" value="UniProtKB-SubCell"/>
</dbReference>
<dbReference type="GO" id="GO:0005506">
    <property type="term" value="F:iron ion binding"/>
    <property type="evidence" value="ECO:0007669"/>
    <property type="project" value="UniProtKB-UniRule"/>
</dbReference>
<dbReference type="GO" id="GO:0061711">
    <property type="term" value="F:N(6)-L-threonylcarbamoyladenine synthase activity"/>
    <property type="evidence" value="ECO:0007669"/>
    <property type="project" value="UniProtKB-EC"/>
</dbReference>
<dbReference type="GO" id="GO:0002949">
    <property type="term" value="P:tRNA threonylcarbamoyladenosine modification"/>
    <property type="evidence" value="ECO:0007669"/>
    <property type="project" value="UniProtKB-UniRule"/>
</dbReference>
<dbReference type="CDD" id="cd24133">
    <property type="entry name" value="ASKHA_NBD_TsaD_bac"/>
    <property type="match status" value="1"/>
</dbReference>
<dbReference type="FunFam" id="3.30.420.40:FF:000031">
    <property type="entry name" value="tRNA N6-adenosine threonylcarbamoyltransferase"/>
    <property type="match status" value="1"/>
</dbReference>
<dbReference type="Gene3D" id="3.30.420.40">
    <property type="match status" value="2"/>
</dbReference>
<dbReference type="HAMAP" id="MF_01445">
    <property type="entry name" value="TsaD"/>
    <property type="match status" value="1"/>
</dbReference>
<dbReference type="InterPro" id="IPR043129">
    <property type="entry name" value="ATPase_NBD"/>
</dbReference>
<dbReference type="InterPro" id="IPR000905">
    <property type="entry name" value="Gcp-like_dom"/>
</dbReference>
<dbReference type="InterPro" id="IPR017861">
    <property type="entry name" value="KAE1/TsaD"/>
</dbReference>
<dbReference type="InterPro" id="IPR017860">
    <property type="entry name" value="Peptidase_M22_CS"/>
</dbReference>
<dbReference type="InterPro" id="IPR022450">
    <property type="entry name" value="TsaD"/>
</dbReference>
<dbReference type="NCBIfam" id="TIGR00329">
    <property type="entry name" value="gcp_kae1"/>
    <property type="match status" value="1"/>
</dbReference>
<dbReference type="NCBIfam" id="TIGR03723">
    <property type="entry name" value="T6A_TsaD_YgjD"/>
    <property type="match status" value="1"/>
</dbReference>
<dbReference type="PANTHER" id="PTHR11735">
    <property type="entry name" value="TRNA N6-ADENOSINE THREONYLCARBAMOYLTRANSFERASE"/>
    <property type="match status" value="1"/>
</dbReference>
<dbReference type="PANTHER" id="PTHR11735:SF6">
    <property type="entry name" value="TRNA N6-ADENOSINE THREONYLCARBAMOYLTRANSFERASE, MITOCHONDRIAL"/>
    <property type="match status" value="1"/>
</dbReference>
<dbReference type="Pfam" id="PF00814">
    <property type="entry name" value="TsaD"/>
    <property type="match status" value="1"/>
</dbReference>
<dbReference type="PRINTS" id="PR00789">
    <property type="entry name" value="OSIALOPTASE"/>
</dbReference>
<dbReference type="SUPFAM" id="SSF53067">
    <property type="entry name" value="Actin-like ATPase domain"/>
    <property type="match status" value="2"/>
</dbReference>
<dbReference type="PROSITE" id="PS01016">
    <property type="entry name" value="GLYCOPROTEASE"/>
    <property type="match status" value="1"/>
</dbReference>
<name>TSAD_HAEDU</name>
<sequence length="348" mass="37693">MRILGIETSCDETGVAIYDEQRGLIANQLYSQIEMHADYGGVVPELASRDHIRKTLPLIQAALKEANLTASEIDGIAYTAGPGLVGALLVGATIARALAYAWNVPALAVHHMEGHLMAPMLEENPPEFPFIALLISGGHTQLIKVAGVGEYEILGESIDDAAGEAFDKTGKLLGLDYPAGVALSQLAEKGTPNRFVFPRPMTDRPGLDFSFSGLKTFAANTINAQLDENGQLNEQTRCDIAHAFQQAVVDTIIIKCKRALQQTGYSRLVMAGGVSANKQLRAELATMMQALKGQVYYPRPQFCTDNGAMIAYTGFIRLKKGEKTDLSVSVKPRWPMTTLLKLSAHHKV</sequence>
<accession>Q9L7A5</accession>
<accession>Q7BY71</accession>